<comment type="function">
    <text evidence="4 5">Member of the two-component regulatory system YpdA/YpdB, which is part of a nutrient-sensing regulatory network composed of YpdA/YpdB, the high-affinity pyruvate signaling system BtsS/BtsR and their respective target proteins, YhjX and BtsT. YpdA activates YpdB by phosphorylation in response to high concentrations of extracellular pyruvate. Activation of the YpdA/YpdB signaling cascade also promotes BtsS/BtsR-mediated btsT expression.</text>
</comment>
<comment type="catalytic activity">
    <reaction evidence="6">
        <text>ATP + protein L-histidine = ADP + protein N-phospho-L-histidine.</text>
        <dbReference type="EC" id="2.7.13.3"/>
    </reaction>
</comment>
<comment type="subunit">
    <text evidence="5">Interacts with BtsT and YhjX.</text>
</comment>
<comment type="subcellular location">
    <subcellularLocation>
        <location evidence="3">Cell inner membrane</location>
        <topology evidence="2">Multi-pass membrane protein</topology>
    </subcellularLocation>
</comment>
<comment type="PTM">
    <text evidence="1">Autophosphorylated.</text>
</comment>
<organism>
    <name type="scientific">Escherichia coli (strain K12)</name>
    <dbReference type="NCBI Taxonomy" id="83333"/>
    <lineage>
        <taxon>Bacteria</taxon>
        <taxon>Pseudomonadati</taxon>
        <taxon>Pseudomonadota</taxon>
        <taxon>Gammaproteobacteria</taxon>
        <taxon>Enterobacterales</taxon>
        <taxon>Enterobacteriaceae</taxon>
        <taxon>Escherichia</taxon>
    </lineage>
</organism>
<proteinExistence type="evidence at protein level"/>
<sequence length="565" mass="62657">MHEIFNMLLAVFDRAALMLICLFFLIRIRLFRELLHKSAHSPKELLAVTAIFSLFALFSTWSGVPVEGSLVNVRIIAVMSGGILFGPWVGIITGVIAGIHRYLIDIGGVTAIPCFITSILAGCISGWINLKIPKAQRWRVGILGGMLCETLTMILVIVWAPTTALGIDIVSKIGIPMILGSVCIGFIVLLVQSVEGEKEASAARQAKLALDIANKTLPLFRHVNSESLRKVCEIIRDDIHADAVAITNTDHVLAYVGVGEHNYQNGDDFISPTTRQAMNYGKIIIKNNDEAHRTPEIHSMLVIPLWEKGVVTGTLKIYYCHAHQITSSLQEMAVGLSQIISTQLEVSRAEQLREMANKAELRALQSKINPHFLFNALNAISSSIRLNPDTARQLIFNLSRYLRYNIELKDDEQIDIKKELYQIKDYIAIEQARFGDKLTVIYDIDEEVNCCIPSLLIQPLVENAIVHGIQPCKGKGVVTISVAECGNRVRIAVRDTGHGIDPKVIERVEANEMPGNKIGLLNVHHRVKLLYGEGLHIRRLEPGTEIAFYIPNQRTPVASQATLLL</sequence>
<feature type="chain" id="PRO_0000201338" description="Sensor histidine kinase YpdA">
    <location>
        <begin position="1"/>
        <end position="565"/>
    </location>
</feature>
<feature type="topological domain" description="Cytoplasmic" evidence="7">
    <location>
        <begin position="1"/>
        <end position="3"/>
    </location>
</feature>
<feature type="transmembrane region" description="Helical" evidence="2">
    <location>
        <begin position="4"/>
        <end position="24"/>
    </location>
</feature>
<feature type="topological domain" description="Periplasmic" evidence="7">
    <location>
        <begin position="25"/>
        <end position="45"/>
    </location>
</feature>
<feature type="transmembrane region" description="Helical" evidence="2">
    <location>
        <begin position="46"/>
        <end position="66"/>
    </location>
</feature>
<feature type="topological domain" description="Cytoplasmic" evidence="7">
    <location>
        <begin position="67"/>
        <end position="74"/>
    </location>
</feature>
<feature type="transmembrane region" description="Helical" evidence="2">
    <location>
        <begin position="75"/>
        <end position="95"/>
    </location>
</feature>
<feature type="topological domain" description="Periplasmic" evidence="7">
    <location>
        <begin position="96"/>
        <end position="107"/>
    </location>
</feature>
<feature type="transmembrane region" description="Helical" evidence="2">
    <location>
        <begin position="108"/>
        <end position="128"/>
    </location>
</feature>
<feature type="topological domain" description="Cytoplasmic" evidence="7">
    <location>
        <begin position="129"/>
        <end position="139"/>
    </location>
</feature>
<feature type="transmembrane region" description="Helical" evidence="2">
    <location>
        <begin position="140"/>
        <end position="160"/>
    </location>
</feature>
<feature type="topological domain" description="Periplasmic" evidence="7">
    <location>
        <begin position="161"/>
        <end position="172"/>
    </location>
</feature>
<feature type="transmembrane region" description="Helical" evidence="2">
    <location>
        <begin position="173"/>
        <end position="193"/>
    </location>
</feature>
<feature type="topological domain" description="Cytoplasmic" evidence="3">
    <location>
        <begin position="194"/>
        <end position="565"/>
    </location>
</feature>
<feature type="domain" description="GAF">
    <location>
        <begin position="223"/>
        <end position="342"/>
    </location>
</feature>
<feature type="domain" description="Histidine kinase">
    <location>
        <begin position="343"/>
        <end position="554"/>
    </location>
</feature>
<feature type="modified residue" description="Phosphohistidine; by autocatalysis" evidence="1">
    <location>
        <position position="371"/>
    </location>
</feature>
<feature type="mutagenesis site" description="Lack of activity." evidence="4">
    <original>H</original>
    <variation>Q</variation>
    <location>
        <position position="371"/>
    </location>
</feature>
<evidence type="ECO:0000250" key="1"/>
<evidence type="ECO:0000255" key="2"/>
<evidence type="ECO:0000269" key="3">
    <source>
    </source>
</evidence>
<evidence type="ECO:0000269" key="4">
    <source>
    </source>
</evidence>
<evidence type="ECO:0000269" key="5">
    <source>
    </source>
</evidence>
<evidence type="ECO:0000305" key="6"/>
<evidence type="ECO:0000305" key="7">
    <source>
    </source>
</evidence>
<keyword id="KW-0067">ATP-binding</keyword>
<keyword id="KW-0997">Cell inner membrane</keyword>
<keyword id="KW-1003">Cell membrane</keyword>
<keyword id="KW-0418">Kinase</keyword>
<keyword id="KW-0472">Membrane</keyword>
<keyword id="KW-0547">Nucleotide-binding</keyword>
<keyword id="KW-0597">Phosphoprotein</keyword>
<keyword id="KW-1185">Reference proteome</keyword>
<keyword id="KW-0808">Transferase</keyword>
<keyword id="KW-0812">Transmembrane</keyword>
<keyword id="KW-1133">Transmembrane helix</keyword>
<keyword id="KW-0902">Two-component regulatory system</keyword>
<reference key="1">
    <citation type="journal article" date="1997" name="DNA Res.">
        <title>Construction of a contiguous 874-kb sequence of the Escherichia coli-K12 genome corresponding to 50.0-68.8 min on the linkage map and analysis of its sequence features.</title>
        <authorList>
            <person name="Yamamoto Y."/>
            <person name="Aiba H."/>
            <person name="Baba T."/>
            <person name="Hayashi K."/>
            <person name="Inada T."/>
            <person name="Isono K."/>
            <person name="Itoh T."/>
            <person name="Kimura S."/>
            <person name="Kitagawa M."/>
            <person name="Makino K."/>
            <person name="Miki T."/>
            <person name="Mitsuhashi N."/>
            <person name="Mizobuchi K."/>
            <person name="Mori H."/>
            <person name="Nakade S."/>
            <person name="Nakamura Y."/>
            <person name="Nashimoto H."/>
            <person name="Oshima T."/>
            <person name="Oyama S."/>
            <person name="Saito N."/>
            <person name="Sampei G."/>
            <person name="Satoh Y."/>
            <person name="Sivasundaram S."/>
            <person name="Tagami H."/>
            <person name="Takahashi H."/>
            <person name="Takeda J."/>
            <person name="Takemoto K."/>
            <person name="Uehara K."/>
            <person name="Wada C."/>
            <person name="Yamagata S."/>
            <person name="Horiuchi T."/>
        </authorList>
    </citation>
    <scope>NUCLEOTIDE SEQUENCE [LARGE SCALE GENOMIC DNA]</scope>
    <source>
        <strain>K12 / W3110 / ATCC 27325 / DSM 5911</strain>
    </source>
</reference>
<reference key="2">
    <citation type="journal article" date="1997" name="Science">
        <title>The complete genome sequence of Escherichia coli K-12.</title>
        <authorList>
            <person name="Blattner F.R."/>
            <person name="Plunkett G. III"/>
            <person name="Bloch C.A."/>
            <person name="Perna N.T."/>
            <person name="Burland V."/>
            <person name="Riley M."/>
            <person name="Collado-Vides J."/>
            <person name="Glasner J.D."/>
            <person name="Rode C.K."/>
            <person name="Mayhew G.F."/>
            <person name="Gregor J."/>
            <person name="Davis N.W."/>
            <person name="Kirkpatrick H.A."/>
            <person name="Goeden M.A."/>
            <person name="Rose D.J."/>
            <person name="Mau B."/>
            <person name="Shao Y."/>
        </authorList>
    </citation>
    <scope>NUCLEOTIDE SEQUENCE [LARGE SCALE GENOMIC DNA]</scope>
    <source>
        <strain>K12 / MG1655 / ATCC 47076</strain>
    </source>
</reference>
<reference key="3">
    <citation type="journal article" date="2006" name="Mol. Syst. Biol.">
        <title>Highly accurate genome sequences of Escherichia coli K-12 strains MG1655 and W3110.</title>
        <authorList>
            <person name="Hayashi K."/>
            <person name="Morooka N."/>
            <person name="Yamamoto Y."/>
            <person name="Fujita K."/>
            <person name="Isono K."/>
            <person name="Choi S."/>
            <person name="Ohtsubo E."/>
            <person name="Baba T."/>
            <person name="Wanner B.L."/>
            <person name="Mori H."/>
            <person name="Horiuchi T."/>
        </authorList>
    </citation>
    <scope>NUCLEOTIDE SEQUENCE [LARGE SCALE GENOMIC DNA]</scope>
    <source>
        <strain>K12 / W3110 / ATCC 27325 / DSM 5911</strain>
    </source>
</reference>
<reference key="4">
    <citation type="journal article" date="2005" name="Science">
        <title>Global topology analysis of the Escherichia coli inner membrane proteome.</title>
        <authorList>
            <person name="Daley D.O."/>
            <person name="Rapp M."/>
            <person name="Granseth E."/>
            <person name="Melen K."/>
            <person name="Drew D."/>
            <person name="von Heijne G."/>
        </authorList>
    </citation>
    <scope>SUBCELLULAR LOCATION</scope>
    <scope>TOPOLOGY [LARGE SCALE ANALYSIS]</scope>
    <source>
        <strain>K12 / MG1655 / ATCC 47076</strain>
    </source>
</reference>
<reference key="5">
    <citation type="journal article" date="2013" name="J. Bacteriol.">
        <title>Identification of a target gene and activating stimulus for the YpdA/YpdB histidine kinase/response regulator system in Escherichia coli.</title>
        <authorList>
            <person name="Fried L."/>
            <person name="Behr S."/>
            <person name="Jung K."/>
        </authorList>
    </citation>
    <scope>FUNCTION</scope>
    <scope>MUTAGENESIS OF HIS-371</scope>
    <source>
        <strain>K12 / MG1655 / ATCC 47076</strain>
    </source>
</reference>
<reference key="6">
    <citation type="journal article" date="2014" name="J. Bacteriol.">
        <title>Identification of a novel nutrient-sensing histidine kinase/response regulator network in Escherichia coli.</title>
        <authorList>
            <person name="Behr S."/>
            <person name="Fried L."/>
            <person name="Jung K."/>
        </authorList>
    </citation>
    <scope>FUNCTION</scope>
    <scope>INTERACTION WITH BTST AND YHJX</scope>
    <source>
        <strain>K12 / MG1655 / ATCC 47076</strain>
    </source>
</reference>
<accession>P0AA93</accession>
<accession>P76523</accession>
<accession>P76950</accession>
<dbReference type="EC" id="2.7.13.3"/>
<dbReference type="EMBL" id="U00096">
    <property type="protein sequence ID" value="AAC75439.1"/>
    <property type="molecule type" value="Genomic_DNA"/>
</dbReference>
<dbReference type="EMBL" id="AP009048">
    <property type="protein sequence ID" value="BAA16250.2"/>
    <property type="molecule type" value="Genomic_DNA"/>
</dbReference>
<dbReference type="PIR" id="A65012">
    <property type="entry name" value="A65012"/>
</dbReference>
<dbReference type="RefSeq" id="NP_416881.1">
    <property type="nucleotide sequence ID" value="NC_000913.3"/>
</dbReference>
<dbReference type="RefSeq" id="WP_000544359.1">
    <property type="nucleotide sequence ID" value="NZ_STEB01000008.1"/>
</dbReference>
<dbReference type="SMR" id="P0AA93"/>
<dbReference type="BioGRID" id="4260545">
    <property type="interactions" value="186"/>
</dbReference>
<dbReference type="FunCoup" id="P0AA93">
    <property type="interactions" value="165"/>
</dbReference>
<dbReference type="STRING" id="511145.b2380"/>
<dbReference type="jPOST" id="P0AA93"/>
<dbReference type="PaxDb" id="511145-b2380"/>
<dbReference type="EnsemblBacteria" id="AAC75439">
    <property type="protein sequence ID" value="AAC75439"/>
    <property type="gene ID" value="b2380"/>
</dbReference>
<dbReference type="GeneID" id="75202551"/>
<dbReference type="GeneID" id="946723"/>
<dbReference type="KEGG" id="ecj:JW5388"/>
<dbReference type="KEGG" id="eco:b2380"/>
<dbReference type="KEGG" id="ecoc:C3026_13235"/>
<dbReference type="PATRIC" id="fig|1411691.4.peg.4348"/>
<dbReference type="EchoBASE" id="EB3900"/>
<dbReference type="eggNOG" id="COG3275">
    <property type="taxonomic scope" value="Bacteria"/>
</dbReference>
<dbReference type="HOGENOM" id="CLU_020473_3_3_6"/>
<dbReference type="InParanoid" id="P0AA93"/>
<dbReference type="OMA" id="RVARNEM"/>
<dbReference type="OrthoDB" id="2514702at2"/>
<dbReference type="PhylomeDB" id="P0AA93"/>
<dbReference type="BioCyc" id="EcoCyc:G7243-MONOMER"/>
<dbReference type="BioCyc" id="MetaCyc:G7243-MONOMER"/>
<dbReference type="PRO" id="PR:P0AA93"/>
<dbReference type="Proteomes" id="UP000000625">
    <property type="component" value="Chromosome"/>
</dbReference>
<dbReference type="GO" id="GO:0005886">
    <property type="term" value="C:plasma membrane"/>
    <property type="evidence" value="ECO:0000314"/>
    <property type="project" value="EcoCyc"/>
</dbReference>
<dbReference type="GO" id="GO:0005524">
    <property type="term" value="F:ATP binding"/>
    <property type="evidence" value="ECO:0007669"/>
    <property type="project" value="UniProtKB-KW"/>
</dbReference>
<dbReference type="GO" id="GO:0000155">
    <property type="term" value="F:phosphorelay sensor kinase activity"/>
    <property type="evidence" value="ECO:0000315"/>
    <property type="project" value="EcoCyc"/>
</dbReference>
<dbReference type="GO" id="GO:0004673">
    <property type="term" value="F:protein histidine kinase activity"/>
    <property type="evidence" value="ECO:0000315"/>
    <property type="project" value="EcoCyc"/>
</dbReference>
<dbReference type="GO" id="GO:0071555">
    <property type="term" value="P:cell wall organization"/>
    <property type="evidence" value="ECO:0007669"/>
    <property type="project" value="InterPro"/>
</dbReference>
<dbReference type="GO" id="GO:0031670">
    <property type="term" value="P:cellular response to nutrient"/>
    <property type="evidence" value="ECO:0000315"/>
    <property type="project" value="EcoCyc"/>
</dbReference>
<dbReference type="GO" id="GO:0007165">
    <property type="term" value="P:signal transduction"/>
    <property type="evidence" value="ECO:0000315"/>
    <property type="project" value="EcoCyc"/>
</dbReference>
<dbReference type="CDD" id="cd16955">
    <property type="entry name" value="HATPase_YpdA-like"/>
    <property type="match status" value="1"/>
</dbReference>
<dbReference type="FunFam" id="1.10.1760.20:FF:000002">
    <property type="entry name" value="Sensor histidine kinase YpdA"/>
    <property type="match status" value="1"/>
</dbReference>
<dbReference type="FunFam" id="3.30.450.40:FF:000027">
    <property type="entry name" value="Sensor histidine kinase YpdA"/>
    <property type="match status" value="1"/>
</dbReference>
<dbReference type="FunFam" id="3.30.565.10:FF:000036">
    <property type="entry name" value="Sensor histidine kinase YpdA"/>
    <property type="match status" value="1"/>
</dbReference>
<dbReference type="Gene3D" id="1.10.1760.20">
    <property type="match status" value="1"/>
</dbReference>
<dbReference type="Gene3D" id="3.30.450.40">
    <property type="match status" value="1"/>
</dbReference>
<dbReference type="Gene3D" id="3.30.565.10">
    <property type="entry name" value="Histidine kinase-like ATPase, C-terminal domain"/>
    <property type="match status" value="1"/>
</dbReference>
<dbReference type="InterPro" id="IPR050640">
    <property type="entry name" value="Bact_2-comp_sensor_kinase"/>
</dbReference>
<dbReference type="InterPro" id="IPR003018">
    <property type="entry name" value="GAF"/>
</dbReference>
<dbReference type="InterPro" id="IPR029016">
    <property type="entry name" value="GAF-like_dom_sf"/>
</dbReference>
<dbReference type="InterPro" id="IPR036890">
    <property type="entry name" value="HATPase_C_sf"/>
</dbReference>
<dbReference type="InterPro" id="IPR010559">
    <property type="entry name" value="Sig_transdc_His_kin_internal"/>
</dbReference>
<dbReference type="InterPro" id="IPR011620">
    <property type="entry name" value="Sig_transdc_His_kinase_LytS_TM"/>
</dbReference>
<dbReference type="InterPro" id="IPR047965">
    <property type="entry name" value="YpdA-like_HATPase"/>
</dbReference>
<dbReference type="PANTHER" id="PTHR34220">
    <property type="entry name" value="SENSOR HISTIDINE KINASE YPDA"/>
    <property type="match status" value="1"/>
</dbReference>
<dbReference type="PANTHER" id="PTHR34220:SF7">
    <property type="entry name" value="SENSOR HISTIDINE KINASE YPDA"/>
    <property type="match status" value="1"/>
</dbReference>
<dbReference type="Pfam" id="PF07694">
    <property type="entry name" value="5TM-5TMR_LYT"/>
    <property type="match status" value="1"/>
</dbReference>
<dbReference type="Pfam" id="PF01590">
    <property type="entry name" value="GAF"/>
    <property type="match status" value="1"/>
</dbReference>
<dbReference type="Pfam" id="PF02518">
    <property type="entry name" value="HATPase_c"/>
    <property type="match status" value="1"/>
</dbReference>
<dbReference type="Pfam" id="PF06580">
    <property type="entry name" value="His_kinase"/>
    <property type="match status" value="1"/>
</dbReference>
<dbReference type="SMART" id="SM00387">
    <property type="entry name" value="HATPase_c"/>
    <property type="match status" value="1"/>
</dbReference>
<dbReference type="SUPFAM" id="SSF55874">
    <property type="entry name" value="ATPase domain of HSP90 chaperone/DNA topoisomerase II/histidine kinase"/>
    <property type="match status" value="1"/>
</dbReference>
<dbReference type="SUPFAM" id="SSF55781">
    <property type="entry name" value="GAF domain-like"/>
    <property type="match status" value="1"/>
</dbReference>
<protein>
    <recommendedName>
        <fullName evidence="6">Sensor histidine kinase YpdA</fullName>
        <ecNumber>2.7.13.3</ecNumber>
    </recommendedName>
</protein>
<name>YPDA_ECOLI</name>
<gene>
    <name type="primary">ypdA</name>
    <name type="ordered locus">b2380</name>
    <name type="ordered locus">JW5388</name>
</gene>